<reference key="1">
    <citation type="journal article" date="2002" name="Nat. Genet.">
        <title>Genome sequence of the endocellular obligate symbiont of tsetse flies, Wigglesworthia glossinidia.</title>
        <authorList>
            <person name="Akman L."/>
            <person name="Yamashita A."/>
            <person name="Watanabe H."/>
            <person name="Oshima K."/>
            <person name="Shiba T."/>
            <person name="Hattori M."/>
            <person name="Aksoy S."/>
        </authorList>
    </citation>
    <scope>NUCLEOTIDE SEQUENCE [LARGE SCALE GENOMIC DNA]</scope>
</reference>
<organism>
    <name type="scientific">Wigglesworthia glossinidia brevipalpis</name>
    <dbReference type="NCBI Taxonomy" id="36870"/>
    <lineage>
        <taxon>Bacteria</taxon>
        <taxon>Pseudomonadati</taxon>
        <taxon>Pseudomonadota</taxon>
        <taxon>Gammaproteobacteria</taxon>
        <taxon>Enterobacterales</taxon>
        <taxon>Erwiniaceae</taxon>
        <taxon>Wigglesworthia</taxon>
    </lineage>
</organism>
<accession>Q8D2R3</accession>
<evidence type="ECO:0000255" key="1">
    <source>
        <dbReference type="HAMAP-Rule" id="MF_01643"/>
    </source>
</evidence>
<sequence length="392" mass="44417">MVTINTALCKNSTRVMILGSGELGKEIAIECQRLGIEVISVDSYSNAPAMHVSHRHHVIDMLNPKEIKRCINLEHPDFIVPEIEAISTNALIELEKNGYNIVPSAKTIHITMNRKLIRVLVSKKLNILTSEYQFASSFDELKIKTKVIGYPCLIKPIMSSSGKGQSVIYNEKELRHSWEKSQTYGRTSLGEVIIEKIIPFDFEITLLVVNSVDGMHFCLPIGHRQEKGDYQESWQPHKMDNVIFEKAKKISKKIVSYLGGYGIFGVEFFIYKDKVIFSEISPRPHDTGMVTLISQNLSEFALHVRSFLKLPIGKIRQYGPSSSVVICGNELYGNKISFSNIECINTNQQIRIFSKPNIKGYRRLGVILDQDETIERSLRKAKKTASKILIKT</sequence>
<keyword id="KW-0067">ATP-binding</keyword>
<keyword id="KW-0436">Ligase</keyword>
<keyword id="KW-0460">Magnesium</keyword>
<keyword id="KW-0479">Metal-binding</keyword>
<keyword id="KW-0547">Nucleotide-binding</keyword>
<keyword id="KW-0658">Purine biosynthesis</keyword>
<keyword id="KW-1185">Reference proteome</keyword>
<dbReference type="EC" id="6.3.1.21" evidence="1"/>
<dbReference type="EMBL" id="BA000021">
    <property type="protein sequence ID" value="BAC24437.1"/>
    <property type="molecule type" value="Genomic_DNA"/>
</dbReference>
<dbReference type="SMR" id="Q8D2R3"/>
<dbReference type="STRING" id="36870.gene:10368784"/>
<dbReference type="KEGG" id="wbr:purT"/>
<dbReference type="eggNOG" id="COG0027">
    <property type="taxonomic scope" value="Bacteria"/>
</dbReference>
<dbReference type="HOGENOM" id="CLU_011534_1_3_6"/>
<dbReference type="OrthoDB" id="9804625at2"/>
<dbReference type="UniPathway" id="UPA00074">
    <property type="reaction ID" value="UER00127"/>
</dbReference>
<dbReference type="Proteomes" id="UP000000562">
    <property type="component" value="Chromosome"/>
</dbReference>
<dbReference type="GO" id="GO:0005829">
    <property type="term" value="C:cytosol"/>
    <property type="evidence" value="ECO:0007669"/>
    <property type="project" value="TreeGrafter"/>
</dbReference>
<dbReference type="GO" id="GO:0005524">
    <property type="term" value="F:ATP binding"/>
    <property type="evidence" value="ECO:0007669"/>
    <property type="project" value="UniProtKB-UniRule"/>
</dbReference>
<dbReference type="GO" id="GO:0000287">
    <property type="term" value="F:magnesium ion binding"/>
    <property type="evidence" value="ECO:0007669"/>
    <property type="project" value="InterPro"/>
</dbReference>
<dbReference type="GO" id="GO:0043815">
    <property type="term" value="F:phosphoribosylglycinamide formyltransferase 2 activity"/>
    <property type="evidence" value="ECO:0007669"/>
    <property type="project" value="UniProtKB-UniRule"/>
</dbReference>
<dbReference type="GO" id="GO:0004644">
    <property type="term" value="F:phosphoribosylglycinamide formyltransferase activity"/>
    <property type="evidence" value="ECO:0007669"/>
    <property type="project" value="InterPro"/>
</dbReference>
<dbReference type="GO" id="GO:0006189">
    <property type="term" value="P:'de novo' IMP biosynthetic process"/>
    <property type="evidence" value="ECO:0007669"/>
    <property type="project" value="UniProtKB-UniRule"/>
</dbReference>
<dbReference type="Gene3D" id="3.40.50.20">
    <property type="match status" value="1"/>
</dbReference>
<dbReference type="Gene3D" id="3.30.1490.20">
    <property type="entry name" value="ATP-grasp fold, A domain"/>
    <property type="match status" value="1"/>
</dbReference>
<dbReference type="Gene3D" id="3.30.470.20">
    <property type="entry name" value="ATP-grasp fold, B domain"/>
    <property type="match status" value="1"/>
</dbReference>
<dbReference type="HAMAP" id="MF_01643">
    <property type="entry name" value="PurT"/>
    <property type="match status" value="1"/>
</dbReference>
<dbReference type="InterPro" id="IPR011761">
    <property type="entry name" value="ATP-grasp"/>
</dbReference>
<dbReference type="InterPro" id="IPR003135">
    <property type="entry name" value="ATP-grasp_carboxylate-amine"/>
</dbReference>
<dbReference type="InterPro" id="IPR013815">
    <property type="entry name" value="ATP_grasp_subdomain_1"/>
</dbReference>
<dbReference type="InterPro" id="IPR016185">
    <property type="entry name" value="PreATP-grasp_dom_sf"/>
</dbReference>
<dbReference type="InterPro" id="IPR005862">
    <property type="entry name" value="PurT"/>
</dbReference>
<dbReference type="InterPro" id="IPR054350">
    <property type="entry name" value="PurT/PurK_preATP-grasp"/>
</dbReference>
<dbReference type="InterPro" id="IPR048740">
    <property type="entry name" value="PurT_C"/>
</dbReference>
<dbReference type="NCBIfam" id="NF006766">
    <property type="entry name" value="PRK09288.1"/>
    <property type="match status" value="1"/>
</dbReference>
<dbReference type="NCBIfam" id="TIGR01142">
    <property type="entry name" value="purT"/>
    <property type="match status" value="1"/>
</dbReference>
<dbReference type="PANTHER" id="PTHR43055">
    <property type="entry name" value="FORMATE-DEPENDENT PHOSPHORIBOSYLGLYCINAMIDE FORMYLTRANSFERASE"/>
    <property type="match status" value="1"/>
</dbReference>
<dbReference type="PANTHER" id="PTHR43055:SF1">
    <property type="entry name" value="FORMATE-DEPENDENT PHOSPHORIBOSYLGLYCINAMIDE FORMYLTRANSFERASE"/>
    <property type="match status" value="1"/>
</dbReference>
<dbReference type="Pfam" id="PF02222">
    <property type="entry name" value="ATP-grasp"/>
    <property type="match status" value="1"/>
</dbReference>
<dbReference type="Pfam" id="PF21244">
    <property type="entry name" value="PurT_C"/>
    <property type="match status" value="1"/>
</dbReference>
<dbReference type="Pfam" id="PF22660">
    <property type="entry name" value="RS_preATP-grasp-like"/>
    <property type="match status" value="1"/>
</dbReference>
<dbReference type="SUPFAM" id="SSF56059">
    <property type="entry name" value="Glutathione synthetase ATP-binding domain-like"/>
    <property type="match status" value="1"/>
</dbReference>
<dbReference type="SUPFAM" id="SSF52440">
    <property type="entry name" value="PreATP-grasp domain"/>
    <property type="match status" value="1"/>
</dbReference>
<dbReference type="PROSITE" id="PS50975">
    <property type="entry name" value="ATP_GRASP"/>
    <property type="match status" value="1"/>
</dbReference>
<name>PURT_WIGBR</name>
<comment type="function">
    <text evidence="1">Involved in the de novo purine biosynthesis. Catalyzes the transfer of formate to 5-phospho-ribosyl-glycinamide (GAR), producing 5-phospho-ribosyl-N-formylglycinamide (FGAR). Formate is provided by PurU via hydrolysis of 10-formyl-tetrahydrofolate.</text>
</comment>
<comment type="catalytic activity">
    <reaction evidence="1">
        <text>N(1)-(5-phospho-beta-D-ribosyl)glycinamide + formate + ATP = N(2)-formyl-N(1)-(5-phospho-beta-D-ribosyl)glycinamide + ADP + phosphate + H(+)</text>
        <dbReference type="Rhea" id="RHEA:24829"/>
        <dbReference type="ChEBI" id="CHEBI:15378"/>
        <dbReference type="ChEBI" id="CHEBI:15740"/>
        <dbReference type="ChEBI" id="CHEBI:30616"/>
        <dbReference type="ChEBI" id="CHEBI:43474"/>
        <dbReference type="ChEBI" id="CHEBI:143788"/>
        <dbReference type="ChEBI" id="CHEBI:147286"/>
        <dbReference type="ChEBI" id="CHEBI:456216"/>
        <dbReference type="EC" id="6.3.1.21"/>
    </reaction>
    <physiologicalReaction direction="left-to-right" evidence="1">
        <dbReference type="Rhea" id="RHEA:24830"/>
    </physiologicalReaction>
</comment>
<comment type="pathway">
    <text evidence="1">Purine metabolism; IMP biosynthesis via de novo pathway; N(2)-formyl-N(1)-(5-phospho-D-ribosyl)glycinamide from N(1)-(5-phospho-D-ribosyl)glycinamide (formate route): step 1/1.</text>
</comment>
<comment type="subunit">
    <text evidence="1">Homodimer.</text>
</comment>
<comment type="similarity">
    <text evidence="1">Belongs to the PurK/PurT family.</text>
</comment>
<protein>
    <recommendedName>
        <fullName evidence="1">Formate-dependent phosphoribosylglycinamide formyltransferase</fullName>
        <ecNumber evidence="1">6.3.1.21</ecNumber>
    </recommendedName>
    <alternativeName>
        <fullName evidence="1">5'-phosphoribosylglycinamide transformylase 2</fullName>
    </alternativeName>
    <alternativeName>
        <fullName evidence="1">Formate-dependent GAR transformylase</fullName>
    </alternativeName>
    <alternativeName>
        <fullName evidence="1">GAR transformylase 2</fullName>
        <shortName evidence="1">GART 2</shortName>
    </alternativeName>
    <alternativeName>
        <fullName evidence="1">Non-folate glycinamide ribonucleotide transformylase</fullName>
    </alternativeName>
    <alternativeName>
        <fullName evidence="1">Phosphoribosylglycinamide formyltransferase 2</fullName>
    </alternativeName>
</protein>
<feature type="chain" id="PRO_0000319262" description="Formate-dependent phosphoribosylglycinamide formyltransferase">
    <location>
        <begin position="1"/>
        <end position="392"/>
    </location>
</feature>
<feature type="domain" description="ATP-grasp" evidence="1">
    <location>
        <begin position="119"/>
        <end position="308"/>
    </location>
</feature>
<feature type="binding site" evidence="1">
    <location>
        <begin position="22"/>
        <end position="23"/>
    </location>
    <ligand>
        <name>N(1)-(5-phospho-beta-D-ribosyl)glycinamide</name>
        <dbReference type="ChEBI" id="CHEBI:143788"/>
    </ligand>
</feature>
<feature type="binding site" evidence="1">
    <location>
        <position position="82"/>
    </location>
    <ligand>
        <name>N(1)-(5-phospho-beta-D-ribosyl)glycinamide</name>
        <dbReference type="ChEBI" id="CHEBI:143788"/>
    </ligand>
</feature>
<feature type="binding site" evidence="1">
    <location>
        <position position="114"/>
    </location>
    <ligand>
        <name>ATP</name>
        <dbReference type="ChEBI" id="CHEBI:30616"/>
    </ligand>
</feature>
<feature type="binding site" evidence="1">
    <location>
        <position position="155"/>
    </location>
    <ligand>
        <name>ATP</name>
        <dbReference type="ChEBI" id="CHEBI:30616"/>
    </ligand>
</feature>
<feature type="binding site" evidence="1">
    <location>
        <begin position="160"/>
        <end position="165"/>
    </location>
    <ligand>
        <name>ATP</name>
        <dbReference type="ChEBI" id="CHEBI:30616"/>
    </ligand>
</feature>
<feature type="binding site" evidence="1">
    <location>
        <begin position="195"/>
        <end position="198"/>
    </location>
    <ligand>
        <name>ATP</name>
        <dbReference type="ChEBI" id="CHEBI:30616"/>
    </ligand>
</feature>
<feature type="binding site" evidence="1">
    <location>
        <position position="203"/>
    </location>
    <ligand>
        <name>ATP</name>
        <dbReference type="ChEBI" id="CHEBI:30616"/>
    </ligand>
</feature>
<feature type="binding site" evidence="1">
    <location>
        <position position="267"/>
    </location>
    <ligand>
        <name>Mg(2+)</name>
        <dbReference type="ChEBI" id="CHEBI:18420"/>
    </ligand>
</feature>
<feature type="binding site" evidence="1">
    <location>
        <position position="279"/>
    </location>
    <ligand>
        <name>Mg(2+)</name>
        <dbReference type="ChEBI" id="CHEBI:18420"/>
    </ligand>
</feature>
<feature type="binding site" evidence="1">
    <location>
        <position position="286"/>
    </location>
    <ligand>
        <name>N(1)-(5-phospho-beta-D-ribosyl)glycinamide</name>
        <dbReference type="ChEBI" id="CHEBI:143788"/>
    </ligand>
</feature>
<feature type="binding site" evidence="1">
    <location>
        <position position="355"/>
    </location>
    <ligand>
        <name>N(1)-(5-phospho-beta-D-ribosyl)glycinamide</name>
        <dbReference type="ChEBI" id="CHEBI:143788"/>
    </ligand>
</feature>
<feature type="binding site" evidence="1">
    <location>
        <begin position="362"/>
        <end position="363"/>
    </location>
    <ligand>
        <name>N(1)-(5-phospho-beta-D-ribosyl)glycinamide</name>
        <dbReference type="ChEBI" id="CHEBI:143788"/>
    </ligand>
</feature>
<gene>
    <name evidence="1" type="primary">purT</name>
    <name type="ordered locus">WIGBR2910</name>
</gene>
<proteinExistence type="inferred from homology"/>